<comment type="function">
    <text evidence="2">Hydrolase that can remove 'Lys-48'-linked conjugated ubiquitin from proteins.</text>
</comment>
<comment type="catalytic activity">
    <reaction evidence="2">
        <text>Thiol-dependent hydrolysis of ester, thioester, amide, peptide and isopeptide bonds formed by the C-terminal Gly of ubiquitin (a 76-residue protein attached to proteins as an intracellular targeting signal).</text>
        <dbReference type="EC" id="3.4.19.12"/>
    </reaction>
</comment>
<comment type="subunit">
    <text evidence="2">Interacts with COPS5.</text>
</comment>
<comment type="subcellular location">
    <subcellularLocation>
        <location evidence="2">Nucleus</location>
    </subcellularLocation>
</comment>
<comment type="alternative products">
    <event type="alternative splicing"/>
    <isoform>
        <id>Q9CV28-1</id>
        <name>1</name>
        <sequence type="displayed"/>
    </isoform>
    <isoform>
        <id>Q9CV28-2</id>
        <name>2</name>
        <sequence type="described" ref="VSP_031041"/>
    </isoform>
</comment>
<comment type="similarity">
    <text evidence="4">Belongs to the MINDY deubiquitinase family. FAM188 subfamily.</text>
</comment>
<dbReference type="EC" id="3.4.19.12" evidence="2"/>
<dbReference type="EMBL" id="AK002900">
    <property type="protein sequence ID" value="BAB22443.1"/>
    <property type="molecule type" value="mRNA"/>
</dbReference>
<dbReference type="EMBL" id="AK009891">
    <property type="protein sequence ID" value="BAB26566.2"/>
    <property type="molecule type" value="mRNA"/>
</dbReference>
<dbReference type="EMBL" id="AK143250">
    <property type="protein sequence ID" value="BAE25325.1"/>
    <property type="molecule type" value="mRNA"/>
</dbReference>
<dbReference type="EMBL" id="AL772342">
    <property type="status" value="NOT_ANNOTATED_CDS"/>
    <property type="molecule type" value="Genomic_DNA"/>
</dbReference>
<dbReference type="EMBL" id="AL845533">
    <property type="status" value="NOT_ANNOTATED_CDS"/>
    <property type="molecule type" value="Genomic_DNA"/>
</dbReference>
<dbReference type="EMBL" id="BC027202">
    <property type="protein sequence ID" value="AAH27202.1"/>
    <property type="molecule type" value="mRNA"/>
</dbReference>
<dbReference type="CCDS" id="CCDS15690.1">
    <molecule id="Q9CV28-1"/>
</dbReference>
<dbReference type="RefSeq" id="NP_001342464.1">
    <molecule id="Q9CV28-2"/>
    <property type="nucleotide sequence ID" value="NM_001355535.1"/>
</dbReference>
<dbReference type="RefSeq" id="NP_077147.2">
    <molecule id="Q9CV28-1"/>
    <property type="nucleotide sequence ID" value="NM_024185.4"/>
</dbReference>
<dbReference type="FunCoup" id="Q9CV28">
    <property type="interactions" value="3687"/>
</dbReference>
<dbReference type="STRING" id="10090.ENSMUSP00000028105"/>
<dbReference type="iPTMnet" id="Q9CV28"/>
<dbReference type="PhosphoSitePlus" id="Q9CV28"/>
<dbReference type="SwissPalm" id="Q9CV28"/>
<dbReference type="jPOST" id="Q9CV28"/>
<dbReference type="PaxDb" id="10090-ENSMUSP00000028105"/>
<dbReference type="PeptideAtlas" id="Q9CV28"/>
<dbReference type="ProteomicsDB" id="295610">
    <molecule id="Q9CV28-1"/>
</dbReference>
<dbReference type="ProteomicsDB" id="295611">
    <molecule id="Q9CV28-2"/>
</dbReference>
<dbReference type="Pumba" id="Q9CV28"/>
<dbReference type="Antibodypedia" id="25119">
    <property type="antibodies" value="45 antibodies from 16 providers"/>
</dbReference>
<dbReference type="Ensembl" id="ENSMUST00000028105.13">
    <molecule id="Q9CV28-1"/>
    <property type="protein sequence ID" value="ENSMUSP00000028105.7"/>
    <property type="gene ID" value="ENSMUSG00000026767.13"/>
</dbReference>
<dbReference type="GeneID" id="66960"/>
<dbReference type="KEGG" id="mmu:66960"/>
<dbReference type="UCSC" id="uc008ijn.1">
    <molecule id="Q9CV28-1"/>
    <property type="organism name" value="mouse"/>
</dbReference>
<dbReference type="UCSC" id="uc008ijs.1">
    <molecule id="Q9CV28-2"/>
    <property type="organism name" value="mouse"/>
</dbReference>
<dbReference type="AGR" id="MGI:1914210"/>
<dbReference type="CTD" id="80013"/>
<dbReference type="MGI" id="MGI:1914210">
    <property type="gene designation" value="Mindy3"/>
</dbReference>
<dbReference type="VEuPathDB" id="HostDB:ENSMUSG00000026767"/>
<dbReference type="eggNOG" id="KOG2871">
    <property type="taxonomic scope" value="Eukaryota"/>
</dbReference>
<dbReference type="GeneTree" id="ENSGT00940000155958"/>
<dbReference type="HOGENOM" id="CLU_033478_0_0_1"/>
<dbReference type="InParanoid" id="Q9CV28"/>
<dbReference type="OMA" id="VLQTKWP"/>
<dbReference type="OrthoDB" id="9981542at2759"/>
<dbReference type="PhylomeDB" id="Q9CV28"/>
<dbReference type="TreeFam" id="TF323996"/>
<dbReference type="BioGRID-ORCS" id="66960">
    <property type="hits" value="3 hits in 77 CRISPR screens"/>
</dbReference>
<dbReference type="ChiTaRS" id="Car8">
    <property type="organism name" value="mouse"/>
</dbReference>
<dbReference type="PRO" id="PR:Q9CV28"/>
<dbReference type="Proteomes" id="UP000000589">
    <property type="component" value="Chromosome 2"/>
</dbReference>
<dbReference type="RNAct" id="Q9CV28">
    <property type="molecule type" value="protein"/>
</dbReference>
<dbReference type="Bgee" id="ENSMUSG00000026767">
    <property type="expression patterns" value="Expressed in dorsal pancreas and 259 other cell types or tissues"/>
</dbReference>
<dbReference type="ExpressionAtlas" id="Q9CV28">
    <property type="expression patterns" value="baseline and differential"/>
</dbReference>
<dbReference type="GO" id="GO:0031965">
    <property type="term" value="C:nuclear membrane"/>
    <property type="evidence" value="ECO:0007669"/>
    <property type="project" value="Ensembl"/>
</dbReference>
<dbReference type="GO" id="GO:0005654">
    <property type="term" value="C:nucleoplasm"/>
    <property type="evidence" value="ECO:0007669"/>
    <property type="project" value="Ensembl"/>
</dbReference>
<dbReference type="GO" id="GO:0004843">
    <property type="term" value="F:cysteine-type deubiquitinase activity"/>
    <property type="evidence" value="ECO:0007669"/>
    <property type="project" value="UniProtKB-EC"/>
</dbReference>
<dbReference type="GO" id="GO:1990380">
    <property type="term" value="F:K48-linked deubiquitinase activity"/>
    <property type="evidence" value="ECO:0007669"/>
    <property type="project" value="Ensembl"/>
</dbReference>
<dbReference type="GO" id="GO:0006915">
    <property type="term" value="P:apoptotic process"/>
    <property type="evidence" value="ECO:0007669"/>
    <property type="project" value="UniProtKB-KW"/>
</dbReference>
<dbReference type="GO" id="GO:0071108">
    <property type="term" value="P:protein K48-linked deubiquitination"/>
    <property type="evidence" value="ECO:0007669"/>
    <property type="project" value="InterPro"/>
</dbReference>
<dbReference type="GO" id="GO:0006508">
    <property type="term" value="P:proteolysis"/>
    <property type="evidence" value="ECO:0007669"/>
    <property type="project" value="UniProtKB-KW"/>
</dbReference>
<dbReference type="FunFam" id="1.10.238.10:FF:000315">
    <property type="entry name" value="Ubiquitin carboxyl-terminal hydrolase MINDY-3"/>
    <property type="match status" value="1"/>
</dbReference>
<dbReference type="Gene3D" id="1.10.238.10">
    <property type="entry name" value="EF-hand"/>
    <property type="match status" value="1"/>
</dbReference>
<dbReference type="InterPro" id="IPR011992">
    <property type="entry name" value="EF-hand-dom_pair"/>
</dbReference>
<dbReference type="InterPro" id="IPR025257">
    <property type="entry name" value="MINDY-3/4_CD"/>
</dbReference>
<dbReference type="InterPro" id="IPR039785">
    <property type="entry name" value="MINY3/4"/>
</dbReference>
<dbReference type="PANTHER" id="PTHR12473:SF17">
    <property type="entry name" value="UBIQUITIN CARBOXYL-TERMINAL HYDROLASE MINDY-3"/>
    <property type="match status" value="1"/>
</dbReference>
<dbReference type="PANTHER" id="PTHR12473">
    <property type="entry name" value="UBIQUITIN CARBOXYL-TERMINAL HYDROLASE MINDY-4-RELATED"/>
    <property type="match status" value="1"/>
</dbReference>
<dbReference type="Pfam" id="PF13898">
    <property type="entry name" value="MINDY-3_4_CD"/>
    <property type="match status" value="1"/>
</dbReference>
<dbReference type="SMART" id="SM01174">
    <property type="entry name" value="DUF4205"/>
    <property type="match status" value="1"/>
</dbReference>
<dbReference type="SUPFAM" id="SSF47473">
    <property type="entry name" value="EF-hand"/>
    <property type="match status" value="1"/>
</dbReference>
<protein>
    <recommendedName>
        <fullName evidence="4">Ubiquitin carboxyl-terminal hydrolase MINDY-3</fullName>
        <ecNumber evidence="2">3.4.19.12</ecNumber>
    </recommendedName>
    <alternativeName>
        <fullName evidence="2">Deubiquitinating enzyme MINDY-3</fullName>
    </alternativeName>
    <alternativeName>
        <fullName evidence="5">MINDY lysine 48 deubiquitinase 3</fullName>
    </alternativeName>
    <alternativeName>
        <fullName evidence="2">Protein CARP</fullName>
    </alternativeName>
</protein>
<evidence type="ECO:0000250" key="1">
    <source>
        <dbReference type="UniProtKB" id="Q8N5J2"/>
    </source>
</evidence>
<evidence type="ECO:0000250" key="2">
    <source>
        <dbReference type="UniProtKB" id="Q9H8M7"/>
    </source>
</evidence>
<evidence type="ECO:0000303" key="3">
    <source>
    </source>
</evidence>
<evidence type="ECO:0000305" key="4"/>
<evidence type="ECO:0000312" key="5">
    <source>
        <dbReference type="MGI" id="MGI:1914210"/>
    </source>
</evidence>
<evidence type="ECO:0007744" key="6">
    <source>
    </source>
</evidence>
<organism>
    <name type="scientific">Mus musculus</name>
    <name type="common">Mouse</name>
    <dbReference type="NCBI Taxonomy" id="10090"/>
    <lineage>
        <taxon>Eukaryota</taxon>
        <taxon>Metazoa</taxon>
        <taxon>Chordata</taxon>
        <taxon>Craniata</taxon>
        <taxon>Vertebrata</taxon>
        <taxon>Euteleostomi</taxon>
        <taxon>Mammalia</taxon>
        <taxon>Eutheria</taxon>
        <taxon>Euarchontoglires</taxon>
        <taxon>Glires</taxon>
        <taxon>Rodentia</taxon>
        <taxon>Myomorpha</taxon>
        <taxon>Muroidea</taxon>
        <taxon>Muridae</taxon>
        <taxon>Murinae</taxon>
        <taxon>Mus</taxon>
        <taxon>Mus</taxon>
    </lineage>
</organism>
<gene>
    <name evidence="5" type="primary">Mindy3</name>
    <name evidence="2" type="synonym">Carp</name>
    <name evidence="5" type="synonym">Fam188a</name>
</gene>
<sequence length="444" mass="49612">MSEVTKELLELVWGTKSSPGLSDTIFCRWTQGFVFSESEGSALEQFEGGPCAVIAPVQAFLLKKLLFSSEKSSWRDCSEEEQKELLCHTLCDIVESAYDSSGSYCLVSWLRGRTPEEAARISGSPAQSSCQVEHSSALAVEELGFERFHALIQKRSFRTVSELKDAVLDQYSMWGNKFGVLLFLYSVLLTKGIENIKNSIEDANEPLIDPVYGHGSQSLINLLLTGHAVSNVWDGDRECSGMQLLGIHEQAAVGFLTLMEALRYCKVGSYLKSPKFPIWIVGSETHLTVFFAKDMALVAPEAPSEQARRVFQTYDPEDNGFIADSLLEDVMKALDLVSDPEYINLMKNKLDPEGLGIILLGPFLQEFFPDQGSSGPESFTVYHYNGLKQSNYNEKVMYVEGTAVVMGFEDPMLQTDDTPIKRCLQTKWPYIELLWTTDRCPSLN</sequence>
<keyword id="KW-0025">Alternative splicing</keyword>
<keyword id="KW-0053">Apoptosis</keyword>
<keyword id="KW-0378">Hydrolase</keyword>
<keyword id="KW-0539">Nucleus</keyword>
<keyword id="KW-0597">Phosphoprotein</keyword>
<keyword id="KW-0645">Protease</keyword>
<keyword id="KW-1185">Reference proteome</keyword>
<keyword id="KW-0788">Thiol protease</keyword>
<keyword id="KW-0833">Ubl conjugation pathway</keyword>
<reference key="1">
    <citation type="journal article" date="2005" name="Science">
        <title>The transcriptional landscape of the mammalian genome.</title>
        <authorList>
            <person name="Carninci P."/>
            <person name="Kasukawa T."/>
            <person name="Katayama S."/>
            <person name="Gough J."/>
            <person name="Frith M.C."/>
            <person name="Maeda N."/>
            <person name="Oyama R."/>
            <person name="Ravasi T."/>
            <person name="Lenhard B."/>
            <person name="Wells C."/>
            <person name="Kodzius R."/>
            <person name="Shimokawa K."/>
            <person name="Bajic V.B."/>
            <person name="Brenner S.E."/>
            <person name="Batalov S."/>
            <person name="Forrest A.R."/>
            <person name="Zavolan M."/>
            <person name="Davis M.J."/>
            <person name="Wilming L.G."/>
            <person name="Aidinis V."/>
            <person name="Allen J.E."/>
            <person name="Ambesi-Impiombato A."/>
            <person name="Apweiler R."/>
            <person name="Aturaliya R.N."/>
            <person name="Bailey T.L."/>
            <person name="Bansal M."/>
            <person name="Baxter L."/>
            <person name="Beisel K.W."/>
            <person name="Bersano T."/>
            <person name="Bono H."/>
            <person name="Chalk A.M."/>
            <person name="Chiu K.P."/>
            <person name="Choudhary V."/>
            <person name="Christoffels A."/>
            <person name="Clutterbuck D.R."/>
            <person name="Crowe M.L."/>
            <person name="Dalla E."/>
            <person name="Dalrymple B.P."/>
            <person name="de Bono B."/>
            <person name="Della Gatta G."/>
            <person name="di Bernardo D."/>
            <person name="Down T."/>
            <person name="Engstrom P."/>
            <person name="Fagiolini M."/>
            <person name="Faulkner G."/>
            <person name="Fletcher C.F."/>
            <person name="Fukushima T."/>
            <person name="Furuno M."/>
            <person name="Futaki S."/>
            <person name="Gariboldi M."/>
            <person name="Georgii-Hemming P."/>
            <person name="Gingeras T.R."/>
            <person name="Gojobori T."/>
            <person name="Green R.E."/>
            <person name="Gustincich S."/>
            <person name="Harbers M."/>
            <person name="Hayashi Y."/>
            <person name="Hensch T.K."/>
            <person name="Hirokawa N."/>
            <person name="Hill D."/>
            <person name="Huminiecki L."/>
            <person name="Iacono M."/>
            <person name="Ikeo K."/>
            <person name="Iwama A."/>
            <person name="Ishikawa T."/>
            <person name="Jakt M."/>
            <person name="Kanapin A."/>
            <person name="Katoh M."/>
            <person name="Kawasawa Y."/>
            <person name="Kelso J."/>
            <person name="Kitamura H."/>
            <person name="Kitano H."/>
            <person name="Kollias G."/>
            <person name="Krishnan S.P."/>
            <person name="Kruger A."/>
            <person name="Kummerfeld S.K."/>
            <person name="Kurochkin I.V."/>
            <person name="Lareau L.F."/>
            <person name="Lazarevic D."/>
            <person name="Lipovich L."/>
            <person name="Liu J."/>
            <person name="Liuni S."/>
            <person name="McWilliam S."/>
            <person name="Madan Babu M."/>
            <person name="Madera M."/>
            <person name="Marchionni L."/>
            <person name="Matsuda H."/>
            <person name="Matsuzawa S."/>
            <person name="Miki H."/>
            <person name="Mignone F."/>
            <person name="Miyake S."/>
            <person name="Morris K."/>
            <person name="Mottagui-Tabar S."/>
            <person name="Mulder N."/>
            <person name="Nakano N."/>
            <person name="Nakauchi H."/>
            <person name="Ng P."/>
            <person name="Nilsson R."/>
            <person name="Nishiguchi S."/>
            <person name="Nishikawa S."/>
            <person name="Nori F."/>
            <person name="Ohara O."/>
            <person name="Okazaki Y."/>
            <person name="Orlando V."/>
            <person name="Pang K.C."/>
            <person name="Pavan W.J."/>
            <person name="Pavesi G."/>
            <person name="Pesole G."/>
            <person name="Petrovsky N."/>
            <person name="Piazza S."/>
            <person name="Reed J."/>
            <person name="Reid J.F."/>
            <person name="Ring B.Z."/>
            <person name="Ringwald M."/>
            <person name="Rost B."/>
            <person name="Ruan Y."/>
            <person name="Salzberg S.L."/>
            <person name="Sandelin A."/>
            <person name="Schneider C."/>
            <person name="Schoenbach C."/>
            <person name="Sekiguchi K."/>
            <person name="Semple C.A."/>
            <person name="Seno S."/>
            <person name="Sessa L."/>
            <person name="Sheng Y."/>
            <person name="Shibata Y."/>
            <person name="Shimada H."/>
            <person name="Shimada K."/>
            <person name="Silva D."/>
            <person name="Sinclair B."/>
            <person name="Sperling S."/>
            <person name="Stupka E."/>
            <person name="Sugiura K."/>
            <person name="Sultana R."/>
            <person name="Takenaka Y."/>
            <person name="Taki K."/>
            <person name="Tammoja K."/>
            <person name="Tan S.L."/>
            <person name="Tang S."/>
            <person name="Taylor M.S."/>
            <person name="Tegner J."/>
            <person name="Teichmann S.A."/>
            <person name="Ueda H.R."/>
            <person name="van Nimwegen E."/>
            <person name="Verardo R."/>
            <person name="Wei C.L."/>
            <person name="Yagi K."/>
            <person name="Yamanishi H."/>
            <person name="Zabarovsky E."/>
            <person name="Zhu S."/>
            <person name="Zimmer A."/>
            <person name="Hide W."/>
            <person name="Bult C."/>
            <person name="Grimmond S.M."/>
            <person name="Teasdale R.D."/>
            <person name="Liu E.T."/>
            <person name="Brusic V."/>
            <person name="Quackenbush J."/>
            <person name="Wahlestedt C."/>
            <person name="Mattick J.S."/>
            <person name="Hume D.A."/>
            <person name="Kai C."/>
            <person name="Sasaki D."/>
            <person name="Tomaru Y."/>
            <person name="Fukuda S."/>
            <person name="Kanamori-Katayama M."/>
            <person name="Suzuki M."/>
            <person name="Aoki J."/>
            <person name="Arakawa T."/>
            <person name="Iida J."/>
            <person name="Imamura K."/>
            <person name="Itoh M."/>
            <person name="Kato T."/>
            <person name="Kawaji H."/>
            <person name="Kawagashira N."/>
            <person name="Kawashima T."/>
            <person name="Kojima M."/>
            <person name="Kondo S."/>
            <person name="Konno H."/>
            <person name="Nakano K."/>
            <person name="Ninomiya N."/>
            <person name="Nishio T."/>
            <person name="Okada M."/>
            <person name="Plessy C."/>
            <person name="Shibata K."/>
            <person name="Shiraki T."/>
            <person name="Suzuki S."/>
            <person name="Tagami M."/>
            <person name="Waki K."/>
            <person name="Watahiki A."/>
            <person name="Okamura-Oho Y."/>
            <person name="Suzuki H."/>
            <person name="Kawai J."/>
            <person name="Hayashizaki Y."/>
        </authorList>
    </citation>
    <scope>NUCLEOTIDE SEQUENCE [LARGE SCALE MRNA] (ISOFORMS 1 AND 2)</scope>
    <source>
        <strain>C57BL/6J</strain>
        <tissue>Kidney</tissue>
        <tissue>Tongue</tissue>
    </source>
</reference>
<reference key="2">
    <citation type="journal article" date="2009" name="PLoS Biol.">
        <title>Lineage-specific biology revealed by a finished genome assembly of the mouse.</title>
        <authorList>
            <person name="Church D.M."/>
            <person name="Goodstadt L."/>
            <person name="Hillier L.W."/>
            <person name="Zody M.C."/>
            <person name="Goldstein S."/>
            <person name="She X."/>
            <person name="Bult C.J."/>
            <person name="Agarwala R."/>
            <person name="Cherry J.L."/>
            <person name="DiCuccio M."/>
            <person name="Hlavina W."/>
            <person name="Kapustin Y."/>
            <person name="Meric P."/>
            <person name="Maglott D."/>
            <person name="Birtle Z."/>
            <person name="Marques A.C."/>
            <person name="Graves T."/>
            <person name="Zhou S."/>
            <person name="Teague B."/>
            <person name="Potamousis K."/>
            <person name="Churas C."/>
            <person name="Place M."/>
            <person name="Herschleb J."/>
            <person name="Runnheim R."/>
            <person name="Forrest D."/>
            <person name="Amos-Landgraf J."/>
            <person name="Schwartz D.C."/>
            <person name="Cheng Z."/>
            <person name="Lindblad-Toh K."/>
            <person name="Eichler E.E."/>
            <person name="Ponting C.P."/>
        </authorList>
    </citation>
    <scope>NUCLEOTIDE SEQUENCE [LARGE SCALE GENOMIC DNA]</scope>
    <source>
        <strain>C57BL/6J</strain>
    </source>
</reference>
<reference key="3">
    <citation type="journal article" date="2004" name="Genome Res.">
        <title>The status, quality, and expansion of the NIH full-length cDNA project: the Mammalian Gene Collection (MGC).</title>
        <authorList>
            <consortium name="The MGC Project Team"/>
        </authorList>
    </citation>
    <scope>NUCLEOTIDE SEQUENCE [LARGE SCALE MRNA] (ISOFORM 1)</scope>
    <source>
        <strain>FVB/N</strain>
        <tissue>Colon</tissue>
    </source>
</reference>
<reference key="4">
    <citation type="journal article" date="2007" name="Proc. Natl. Acad. Sci. U.S.A.">
        <title>Large-scale phosphorylation analysis of mouse liver.</title>
        <authorList>
            <person name="Villen J."/>
            <person name="Beausoleil S.A."/>
            <person name="Gerber S.A."/>
            <person name="Gygi S.P."/>
        </authorList>
    </citation>
    <scope>IDENTIFICATION BY MASS SPECTROMETRY [LARGE SCALE ANALYSIS]</scope>
    <source>
        <tissue>Liver</tissue>
    </source>
</reference>
<reference key="5">
    <citation type="journal article" date="2010" name="Cell">
        <title>A tissue-specific atlas of mouse protein phosphorylation and expression.</title>
        <authorList>
            <person name="Huttlin E.L."/>
            <person name="Jedrychowski M.P."/>
            <person name="Elias J.E."/>
            <person name="Goswami T."/>
            <person name="Rad R."/>
            <person name="Beausoleil S.A."/>
            <person name="Villen J."/>
            <person name="Haas W."/>
            <person name="Sowa M.E."/>
            <person name="Gygi S.P."/>
        </authorList>
    </citation>
    <scope>PHOSPHORYLATION [LARGE SCALE ANALYSIS] AT SER-124</scope>
    <scope>IDENTIFICATION BY MASS SPECTROMETRY [LARGE SCALE ANALYSIS]</scope>
    <source>
        <tissue>Kidney</tissue>
        <tissue>Pancreas</tissue>
        <tissue>Spleen</tissue>
        <tissue>Testis</tissue>
    </source>
</reference>
<accession>Q9CV28</accession>
<accession>Q3UPS0</accession>
<accession>Q9DCC9</accession>
<proteinExistence type="evidence at protein level"/>
<name>MINY3_MOUSE</name>
<feature type="chain" id="PRO_0000317562" description="Ubiquitin carboxyl-terminal hydrolase MINDY-3">
    <location>
        <begin position="1"/>
        <end position="444"/>
    </location>
</feature>
<feature type="active site" description="Nucleophile" evidence="1">
    <location>
        <position position="51"/>
    </location>
</feature>
<feature type="active site" description="Proton acceptor" evidence="1">
    <location>
        <position position="286"/>
    </location>
</feature>
<feature type="modified residue" description="Phosphoserine" evidence="6">
    <location>
        <position position="124"/>
    </location>
</feature>
<feature type="splice variant" id="VSP_031041" description="In isoform 2." evidence="3">
    <location>
        <begin position="342"/>
        <end position="444"/>
    </location>
</feature>